<evidence type="ECO:0000250" key="1"/>
<evidence type="ECO:0000255" key="2"/>
<evidence type="ECO:0000305" key="3"/>
<sequence>MVRTAVLILLLVRFSEPAEHCNAQMNSGPWRIKNLSIAPPKETLQKDVEIEIVETNMDENVIIGYKGYYQAYAYNGGSLDPNTRIEETMETLNVAKEDLLMWSIRRQCEVGEELIDQWGSDSDNCFRNKDGRGVWVFGKELVKRQNNNHFARHTCNRSWRCGVSTAKMYTRLECDNDNDECKVTILDINGASINVTENTVLHRDGVSMVLKQKSTFSRRPEKVACLLIKDDKSDPRSVTREHCLVDNDIFDLSKNTWLCKFNRCIKRKSENVVKQRPPTWRHDVSAKHDEGASATKGDLMHIQEELMYENDLLRMNLELMHAHINKLNNMLHNLIVSVAKVDERLIGNLMNNSVSSTFLSDDTFLLMPCTHPPPHTSNCYNNSIYKEGRWVANTDSSQCIDFNNYKELAIDDDIEFWIPTIGNTTYHENWKDASGWSFIAQQKSNLISTMENTKFGGHTTSLSDITDMAKGELNAKLWSFMLGHAFSFMLTVGVIIFLFCMVRNRSRAY</sequence>
<reference key="1">
    <citation type="journal article" date="1994" name="J. Gen. Virol.">
        <title>Identification of the gp67 gene of a baculovirus pathogenic to the spruce budworm, Choristoneura fumiferana multinucleocapsid nuclear polyhedrosis virus.</title>
        <authorList>
            <person name="Hill J.E."/>
            <person name="Faulkner P."/>
        </authorList>
    </citation>
    <scope>NUCLEOTIDE SEQUENCE [GENOMIC DNA]</scope>
    <source>
        <strain>Ireland</strain>
    </source>
</reference>
<organism>
    <name type="scientific">Choristoneura fumiferana nuclear polyhedrosis virus</name>
    <name type="common">CfMNPV</name>
    <dbReference type="NCBI Taxonomy" id="208973"/>
    <lineage>
        <taxon>Viruses</taxon>
        <taxon>Viruses incertae sedis</taxon>
        <taxon>Naldaviricetes</taxon>
        <taxon>Lefavirales</taxon>
        <taxon>Baculoviridae</taxon>
        <taxon>Alphabaculovirus</taxon>
        <taxon>Alphabaculovirus chofumiferanae</taxon>
    </lineage>
</organism>
<protein>
    <recommendedName>
        <fullName>Major envelope glycoprotein</fullName>
    </recommendedName>
    <alternativeName>
        <fullName>gp67</fullName>
    </alternativeName>
</protein>
<proteinExistence type="inferred from homology"/>
<feature type="signal peptide" evidence="2">
    <location>
        <begin position="1"/>
        <end position="17"/>
    </location>
</feature>
<feature type="chain" id="PRO_0000036748" description="Major envelope glycoprotein">
    <location>
        <begin position="18"/>
        <end position="509"/>
    </location>
</feature>
<feature type="transmembrane region" description="Helical" evidence="2">
    <location>
        <begin position="480"/>
        <end position="502"/>
    </location>
</feature>
<feature type="lipid moiety-binding region" description="O-palmitoyl serine; by host" evidence="1">
    <location>
        <position position="479"/>
    </location>
</feature>
<feature type="glycosylation site" description="N-linked (GlcNAc...) asparagine; by host" evidence="2">
    <location>
        <position position="34"/>
    </location>
</feature>
<feature type="glycosylation site" description="N-linked (GlcNAc...) asparagine; by host" evidence="2">
    <location>
        <position position="156"/>
    </location>
</feature>
<feature type="glycosylation site" description="N-linked (GlcNAc...) asparagine; by host" evidence="2">
    <location>
        <position position="194"/>
    </location>
</feature>
<feature type="glycosylation site" description="N-linked (GlcNAc...) asparagine; by host" evidence="2">
    <location>
        <position position="351"/>
    </location>
</feature>
<feature type="glycosylation site" description="N-linked (GlcNAc...) asparagine; by host" evidence="2">
    <location>
        <position position="381"/>
    </location>
</feature>
<feature type="glycosylation site" description="N-linked (GlcNAc...) asparagine; by host" evidence="2">
    <location>
        <position position="423"/>
    </location>
</feature>
<feature type="glycosylation site" description="N-linked (GlcNAc...) asparagine; by host" evidence="2">
    <location>
        <position position="504"/>
    </location>
</feature>
<gene>
    <name type="primary">GP67</name>
    <name type="synonym">P67</name>
</gene>
<name>FUS_NPVCF</name>
<comment type="function">
    <text evidence="1">Envelope phosphoglycoprotein which mediates the fusion of viral and host endosomal membranes leading to virus entry into the host cell.</text>
</comment>
<comment type="subcellular location">
    <subcellularLocation>
        <location evidence="3">Virion membrane</location>
        <topology evidence="3">Single-pass membrane protein</topology>
    </subcellularLocation>
    <subcellularLocation>
        <location evidence="3">Host cell membrane</location>
        <topology evidence="3">Single-pass membrane protein</topology>
    </subcellularLocation>
</comment>
<comment type="PTM">
    <text evidence="1">Palmitoylated.</text>
</comment>
<comment type="similarity">
    <text evidence="3">Belongs to the baculoviridae gp64 family.</text>
</comment>
<keyword id="KW-1170">Fusion of virus membrane with host endosomal membrane</keyword>
<keyword id="KW-1168">Fusion of virus membrane with host membrane</keyword>
<keyword id="KW-0325">Glycoprotein</keyword>
<keyword id="KW-1032">Host cell membrane</keyword>
<keyword id="KW-1043">Host membrane</keyword>
<keyword id="KW-0449">Lipoprotein</keyword>
<keyword id="KW-0472">Membrane</keyword>
<keyword id="KW-0564">Palmitate</keyword>
<keyword id="KW-0597">Phosphoprotein</keyword>
<keyword id="KW-0732">Signal</keyword>
<keyword id="KW-0812">Transmembrane</keyword>
<keyword id="KW-1133">Transmembrane helix</keyword>
<keyword id="KW-0261">Viral envelope protein</keyword>
<keyword id="KW-1162">Viral penetration into host cytoplasm</keyword>
<keyword id="KW-0946">Virion</keyword>
<keyword id="KW-1160">Virus entry into host cell</keyword>
<accession>P41717</accession>
<dbReference type="EMBL" id="L12412">
    <property type="protein sequence ID" value="AAA67522.1"/>
    <property type="molecule type" value="Genomic_DNA"/>
</dbReference>
<dbReference type="RefSeq" id="NP_848430.1">
    <property type="nucleotide sequence ID" value="NC_004778.3"/>
</dbReference>
<dbReference type="SMR" id="P41717"/>
<dbReference type="GlyCosmos" id="P41717">
    <property type="glycosylation" value="7 sites, No reported glycans"/>
</dbReference>
<dbReference type="KEGG" id="vg:1482739"/>
<dbReference type="OrthoDB" id="1962at10239"/>
<dbReference type="GO" id="GO:0020002">
    <property type="term" value="C:host cell plasma membrane"/>
    <property type="evidence" value="ECO:0007669"/>
    <property type="project" value="UniProtKB-SubCell"/>
</dbReference>
<dbReference type="GO" id="GO:0016020">
    <property type="term" value="C:membrane"/>
    <property type="evidence" value="ECO:0007669"/>
    <property type="project" value="UniProtKB-KW"/>
</dbReference>
<dbReference type="GO" id="GO:0019031">
    <property type="term" value="C:viral envelope"/>
    <property type="evidence" value="ECO:0007669"/>
    <property type="project" value="UniProtKB-KW"/>
</dbReference>
<dbReference type="GO" id="GO:0055036">
    <property type="term" value="C:virion membrane"/>
    <property type="evidence" value="ECO:0007669"/>
    <property type="project" value="UniProtKB-SubCell"/>
</dbReference>
<dbReference type="GO" id="GO:0039654">
    <property type="term" value="P:fusion of virus membrane with host endosome membrane"/>
    <property type="evidence" value="ECO:0007669"/>
    <property type="project" value="UniProtKB-KW"/>
</dbReference>
<dbReference type="GO" id="GO:0046718">
    <property type="term" value="P:symbiont entry into host cell"/>
    <property type="evidence" value="ECO:0007669"/>
    <property type="project" value="UniProtKB-KW"/>
</dbReference>
<dbReference type="GO" id="GO:0044003">
    <property type="term" value="P:symbiont-mediated perturbation of host process"/>
    <property type="evidence" value="ECO:0007669"/>
    <property type="project" value="InterPro"/>
</dbReference>
<dbReference type="Gene3D" id="2.40.50.710">
    <property type="match status" value="1"/>
</dbReference>
<dbReference type="Gene3D" id="6.10.250.2130">
    <property type="match status" value="1"/>
</dbReference>
<dbReference type="Gene3D" id="6.10.250.3010">
    <property type="match status" value="1"/>
</dbReference>
<dbReference type="Gene3D" id="6.20.460.10">
    <property type="match status" value="1"/>
</dbReference>
<dbReference type="InterPro" id="IPR004955">
    <property type="entry name" value="Baculovirus_Gp64"/>
</dbReference>
<dbReference type="Pfam" id="PF03273">
    <property type="entry name" value="Baculo_gp64"/>
    <property type="match status" value="1"/>
</dbReference>
<organismHost>
    <name type="scientific">Choristoneura fumiferana</name>
    <name type="common">Spruce budworm moth</name>
    <name type="synonym">Archips fumiferana</name>
    <dbReference type="NCBI Taxonomy" id="7141"/>
</organismHost>